<keyword id="KW-0106">Calcium</keyword>
<keyword id="KW-0963">Cytoplasm</keyword>
<keyword id="KW-0903">Direct protein sequencing</keyword>
<keyword id="KW-0479">Metal-binding</keyword>
<keyword id="KW-1185">Reference proteome</keyword>
<keyword id="KW-0677">Repeat</keyword>
<protein>
    <recommendedName>
        <fullName>Calcium-binding protein 5</fullName>
        <shortName>CaBP5</shortName>
    </recommendedName>
</protein>
<comment type="function">
    <text evidence="1 2">Inhibits calcium-dependent inactivation of L-type calcium channel and shifts voltage dependence of activation to more depolarized membrane potentials (By similarity). Involved in the transmission of light signals (By similarity). May positively regulate neurotransmitter vesicle endocytosis and exocytosis in a salt-dependent manner (By similarity). May play a role in the extension and network organization of neurites (By similarity).</text>
</comment>
<comment type="subunit">
    <text evidence="2 5">Interacts with CACNA1C (via C-terminal CDB motif) in a calcium-dependent manner (By similarity). Interacts with STXBP1 (PubMed:22039235). Interacts with MYO6 (PubMed:22039235).</text>
</comment>
<comment type="subcellular location">
    <subcellularLocation>
        <location evidence="3">Cytoplasm</location>
    </subcellularLocation>
</comment>
<comment type="tissue specificity">
    <text evidence="5">Expressed in the retina (at protein level).</text>
</comment>
<name>CABP5_BOVIN</name>
<organism>
    <name type="scientific">Bos taurus</name>
    <name type="common">Bovine</name>
    <dbReference type="NCBI Taxonomy" id="9913"/>
    <lineage>
        <taxon>Eukaryota</taxon>
        <taxon>Metazoa</taxon>
        <taxon>Chordata</taxon>
        <taxon>Craniata</taxon>
        <taxon>Vertebrata</taxon>
        <taxon>Euteleostomi</taxon>
        <taxon>Mammalia</taxon>
        <taxon>Eutheria</taxon>
        <taxon>Laurasiatheria</taxon>
        <taxon>Artiodactyla</taxon>
        <taxon>Ruminantia</taxon>
        <taxon>Pecora</taxon>
        <taxon>Bovidae</taxon>
        <taxon>Bovinae</taxon>
        <taxon>Bos</taxon>
    </lineage>
</organism>
<feature type="chain" id="PRO_0000073523" description="Calcium-binding protein 5">
    <location>
        <begin position="1"/>
        <end position="173"/>
    </location>
</feature>
<feature type="domain" description="EF-hand 1" evidence="4">
    <location>
        <begin position="28"/>
        <end position="63"/>
    </location>
</feature>
<feature type="domain" description="EF-hand 2" evidence="4">
    <location>
        <begin position="82"/>
        <end position="99"/>
    </location>
</feature>
<feature type="domain" description="EF-hand 3" evidence="4">
    <location>
        <begin position="105"/>
        <end position="140"/>
    </location>
</feature>
<feature type="domain" description="EF-hand 4" evidence="4">
    <location>
        <begin position="142"/>
        <end position="173"/>
    </location>
</feature>
<feature type="binding site" evidence="4">
    <location>
        <position position="41"/>
    </location>
    <ligand>
        <name>Ca(2+)</name>
        <dbReference type="ChEBI" id="CHEBI:29108"/>
        <label>1</label>
    </ligand>
</feature>
<feature type="binding site" evidence="4">
    <location>
        <position position="43"/>
    </location>
    <ligand>
        <name>Ca(2+)</name>
        <dbReference type="ChEBI" id="CHEBI:29108"/>
        <label>1</label>
    </ligand>
</feature>
<feature type="binding site" evidence="4">
    <location>
        <position position="45"/>
    </location>
    <ligand>
        <name>Ca(2+)</name>
        <dbReference type="ChEBI" id="CHEBI:29108"/>
        <label>1</label>
    </ligand>
</feature>
<feature type="binding site" evidence="4">
    <location>
        <position position="52"/>
    </location>
    <ligand>
        <name>Ca(2+)</name>
        <dbReference type="ChEBI" id="CHEBI:29108"/>
        <label>1</label>
    </ligand>
</feature>
<feature type="binding site" evidence="4">
    <location>
        <position position="118"/>
    </location>
    <ligand>
        <name>Ca(2+)</name>
        <dbReference type="ChEBI" id="CHEBI:29108"/>
        <label>2</label>
    </ligand>
</feature>
<feature type="binding site" evidence="4">
    <location>
        <position position="120"/>
    </location>
    <ligand>
        <name>Ca(2+)</name>
        <dbReference type="ChEBI" id="CHEBI:29108"/>
        <label>2</label>
    </ligand>
</feature>
<feature type="binding site" evidence="4">
    <location>
        <position position="122"/>
    </location>
    <ligand>
        <name>Ca(2+)</name>
        <dbReference type="ChEBI" id="CHEBI:29108"/>
        <label>2</label>
    </ligand>
</feature>
<feature type="binding site" evidence="4">
    <location>
        <position position="124"/>
    </location>
    <ligand>
        <name>Ca(2+)</name>
        <dbReference type="ChEBI" id="CHEBI:29108"/>
        <label>2</label>
    </ligand>
</feature>
<feature type="binding site" evidence="4">
    <location>
        <position position="129"/>
    </location>
    <ligand>
        <name>Ca(2+)</name>
        <dbReference type="ChEBI" id="CHEBI:29108"/>
        <label>2</label>
    </ligand>
</feature>
<feature type="binding site" evidence="4">
    <location>
        <position position="155"/>
    </location>
    <ligand>
        <name>Ca(2+)</name>
        <dbReference type="ChEBI" id="CHEBI:29108"/>
        <label>3</label>
    </ligand>
</feature>
<feature type="binding site" evidence="4">
    <location>
        <position position="157"/>
    </location>
    <ligand>
        <name>Ca(2+)</name>
        <dbReference type="ChEBI" id="CHEBI:29108"/>
        <label>3</label>
    </ligand>
</feature>
<feature type="binding site" evidence="4">
    <location>
        <position position="159"/>
    </location>
    <ligand>
        <name>Ca(2+)</name>
        <dbReference type="ChEBI" id="CHEBI:29108"/>
        <label>3</label>
    </ligand>
</feature>
<feature type="binding site" evidence="4">
    <location>
        <position position="161"/>
    </location>
    <ligand>
        <name>Ca(2+)</name>
        <dbReference type="ChEBI" id="CHEBI:29108"/>
        <label>3</label>
    </ligand>
</feature>
<feature type="binding site" evidence="4">
    <location>
        <position position="166"/>
    </location>
    <ligand>
        <name>Ca(2+)</name>
        <dbReference type="ChEBI" id="CHEBI:29108"/>
        <label>3</label>
    </ligand>
</feature>
<proteinExistence type="evidence at protein level"/>
<accession>Q9N1Q8</accession>
<gene>
    <name type="primary">CABP5</name>
</gene>
<evidence type="ECO:0000250" key="1">
    <source>
        <dbReference type="UniProtKB" id="D3ZW89"/>
    </source>
</evidence>
<evidence type="ECO:0000250" key="2">
    <source>
        <dbReference type="UniProtKB" id="Q9JLK3"/>
    </source>
</evidence>
<evidence type="ECO:0000250" key="3">
    <source>
        <dbReference type="UniProtKB" id="Q9NP86"/>
    </source>
</evidence>
<evidence type="ECO:0000255" key="4">
    <source>
        <dbReference type="PROSITE-ProRule" id="PRU00448"/>
    </source>
</evidence>
<evidence type="ECO:0000269" key="5">
    <source>
    </source>
</evidence>
<dbReference type="EMBL" id="AF169160">
    <property type="protein sequence ID" value="AAF25794.1"/>
    <property type="molecule type" value="mRNA"/>
</dbReference>
<dbReference type="RefSeq" id="NP_777153.1">
    <property type="nucleotide sequence ID" value="NM_174728.2"/>
</dbReference>
<dbReference type="SMR" id="Q9N1Q8"/>
<dbReference type="STRING" id="9913.ENSBTAP00000021449"/>
<dbReference type="PaxDb" id="9913-ENSBTAP00000021449"/>
<dbReference type="Ensembl" id="ENSBTAT00000021449.6">
    <property type="protein sequence ID" value="ENSBTAP00000021449.4"/>
    <property type="gene ID" value="ENSBTAG00000016114.7"/>
</dbReference>
<dbReference type="GeneID" id="282715"/>
<dbReference type="KEGG" id="bta:282715"/>
<dbReference type="CTD" id="56344"/>
<dbReference type="VEuPathDB" id="HostDB:ENSBTAG00000016114"/>
<dbReference type="VGNC" id="VGNC:26667">
    <property type="gene designation" value="CABP5"/>
</dbReference>
<dbReference type="eggNOG" id="KOG0027">
    <property type="taxonomic scope" value="Eukaryota"/>
</dbReference>
<dbReference type="GeneTree" id="ENSGT00940000160506"/>
<dbReference type="HOGENOM" id="CLU_061288_2_2_1"/>
<dbReference type="InParanoid" id="Q9N1Q8"/>
<dbReference type="OMA" id="DFVEMMT"/>
<dbReference type="OrthoDB" id="26525at2759"/>
<dbReference type="TreeFam" id="TF334804"/>
<dbReference type="Proteomes" id="UP000009136">
    <property type="component" value="Chromosome 18"/>
</dbReference>
<dbReference type="Bgee" id="ENSBTAG00000016114">
    <property type="expression patterns" value="Expressed in retina and 4 other cell types or tissues"/>
</dbReference>
<dbReference type="GO" id="GO:0005737">
    <property type="term" value="C:cytoplasm"/>
    <property type="evidence" value="ECO:0000318"/>
    <property type="project" value="GO_Central"/>
</dbReference>
<dbReference type="GO" id="GO:0005829">
    <property type="term" value="C:cytosol"/>
    <property type="evidence" value="ECO:0007669"/>
    <property type="project" value="Ensembl"/>
</dbReference>
<dbReference type="GO" id="GO:0005246">
    <property type="term" value="F:calcium channel regulator activity"/>
    <property type="evidence" value="ECO:0000318"/>
    <property type="project" value="GO_Central"/>
</dbReference>
<dbReference type="GO" id="GO:0005509">
    <property type="term" value="F:calcium ion binding"/>
    <property type="evidence" value="ECO:0007669"/>
    <property type="project" value="InterPro"/>
</dbReference>
<dbReference type="CDD" id="cd00051">
    <property type="entry name" value="EFh"/>
    <property type="match status" value="1"/>
</dbReference>
<dbReference type="FunFam" id="1.10.238.10:FF:000069">
    <property type="entry name" value="calcium-binding protein 1 isoform X1"/>
    <property type="match status" value="1"/>
</dbReference>
<dbReference type="FunFam" id="1.10.238.10:FF:000037">
    <property type="entry name" value="calcium-binding protein 1 isoform X2"/>
    <property type="match status" value="1"/>
</dbReference>
<dbReference type="Gene3D" id="1.10.238.10">
    <property type="entry name" value="EF-hand"/>
    <property type="match status" value="2"/>
</dbReference>
<dbReference type="InterPro" id="IPR043582">
    <property type="entry name" value="CaBP1/2/4/5"/>
</dbReference>
<dbReference type="InterPro" id="IPR011992">
    <property type="entry name" value="EF-hand-dom_pair"/>
</dbReference>
<dbReference type="InterPro" id="IPR018247">
    <property type="entry name" value="EF_Hand_1_Ca_BS"/>
</dbReference>
<dbReference type="InterPro" id="IPR002048">
    <property type="entry name" value="EF_hand_dom"/>
</dbReference>
<dbReference type="PANTHER" id="PTHR45917">
    <property type="entry name" value="CALCIUM-BINDING PROTEIN 1-RELATED"/>
    <property type="match status" value="1"/>
</dbReference>
<dbReference type="PANTHER" id="PTHR45917:SF3">
    <property type="entry name" value="CALCIUM-BINDING PROTEIN 5"/>
    <property type="match status" value="1"/>
</dbReference>
<dbReference type="Pfam" id="PF13499">
    <property type="entry name" value="EF-hand_7"/>
    <property type="match status" value="2"/>
</dbReference>
<dbReference type="SMART" id="SM00054">
    <property type="entry name" value="EFh"/>
    <property type="match status" value="3"/>
</dbReference>
<dbReference type="SUPFAM" id="SSF47473">
    <property type="entry name" value="EF-hand"/>
    <property type="match status" value="1"/>
</dbReference>
<dbReference type="PROSITE" id="PS00018">
    <property type="entry name" value="EF_HAND_1"/>
    <property type="match status" value="3"/>
</dbReference>
<dbReference type="PROSITE" id="PS50222">
    <property type="entry name" value="EF_HAND_2"/>
    <property type="match status" value="4"/>
</dbReference>
<sequence length="173" mass="19628">MQFPMGPACIFLRKGIAEKQRERPLGPDEIEELREAFLEFDKDRDGFISCKDLGNLMRTMGYMPTEMELIELGQQIRMNLGGRVDFDDFVELMTPKLLAETAGMIGVQEMRDAFKEFDANGDGEITLGELQQAMQRLLGDKLTSQEISEVVQEADINGDGTVDFEEFVKMMSR</sequence>
<reference key="1">
    <citation type="journal article" date="2000" name="J. Biol. Chem.">
        <title>Five members of a novel Ca(2+)-binding protein (CABP) subfamily with similarity to calmodulin.</title>
        <authorList>
            <person name="Haeseleer F."/>
            <person name="Sokal I."/>
            <person name="Verlinde C.L.M.J."/>
            <person name="Erdjument-Bromage H."/>
            <person name="Tempst P."/>
            <person name="Pronin A.N."/>
            <person name="Benovic J.L."/>
            <person name="Fariss R.N."/>
            <person name="Palczewski K."/>
        </authorList>
    </citation>
    <scope>NUCLEOTIDE SEQUENCE [MRNA]</scope>
    <scope>PARTIAL PROTEIN SEQUENCE</scope>
    <scope>IDENTIFICATION BY MASS SPECTROMETRY</scope>
    <source>
        <tissue>Retina</tissue>
    </source>
</reference>
<reference key="2">
    <citation type="journal article" date="2011" name="Invest. Ophthalmol. Vis. Sci.">
        <title>Insight into the role of Ca2+-binding protein 5 in vesicle exocytosis.</title>
        <authorList>
            <person name="Sokal I."/>
            <person name="Haeseleer F."/>
        </authorList>
    </citation>
    <scope>INTERACTION WITH STXBP1 AND MYO6</scope>
    <scope>TISSUE SPECIFICITY</scope>
</reference>